<proteinExistence type="inferred from homology"/>
<evidence type="ECO:0000250" key="1"/>
<evidence type="ECO:0000255" key="2"/>
<evidence type="ECO:0000255" key="3">
    <source>
        <dbReference type="PROSITE-ProRule" id="PRU01240"/>
    </source>
</evidence>
<evidence type="ECO:0000305" key="4"/>
<name>SUB2C_COCP7</name>
<protein>
    <recommendedName>
        <fullName>Subtilisin-like protease CPC735_013710</fullName>
        <ecNumber>3.4.21.-</ecNumber>
    </recommendedName>
</protein>
<dbReference type="EC" id="3.4.21.-"/>
<dbReference type="EMBL" id="ACFW01000001">
    <property type="protein sequence ID" value="EER30053.1"/>
    <property type="molecule type" value="Genomic_DNA"/>
</dbReference>
<dbReference type="RefSeq" id="XP_003072198.1">
    <property type="nucleotide sequence ID" value="XM_003072152.1"/>
</dbReference>
<dbReference type="SMR" id="C5NZ70"/>
<dbReference type="KEGG" id="cpw:9697693"/>
<dbReference type="VEuPathDB" id="FungiDB:CPC735_013710"/>
<dbReference type="HOGENOM" id="CLU_011263_1_4_1"/>
<dbReference type="OrthoDB" id="206201at2759"/>
<dbReference type="Proteomes" id="UP000009084">
    <property type="component" value="Unassembled WGS sequence"/>
</dbReference>
<dbReference type="GO" id="GO:0005576">
    <property type="term" value="C:extracellular region"/>
    <property type="evidence" value="ECO:0007669"/>
    <property type="project" value="UniProtKB-SubCell"/>
</dbReference>
<dbReference type="GO" id="GO:0004252">
    <property type="term" value="F:serine-type endopeptidase activity"/>
    <property type="evidence" value="ECO:0007669"/>
    <property type="project" value="InterPro"/>
</dbReference>
<dbReference type="GO" id="GO:0006508">
    <property type="term" value="P:proteolysis"/>
    <property type="evidence" value="ECO:0007669"/>
    <property type="project" value="UniProtKB-KW"/>
</dbReference>
<dbReference type="CDD" id="cd04077">
    <property type="entry name" value="Peptidases_S8_PCSK9_ProteinaseK_like"/>
    <property type="match status" value="1"/>
</dbReference>
<dbReference type="FunFam" id="3.40.50.200:FF:000007">
    <property type="entry name" value="Subtilisin-like serine protease"/>
    <property type="match status" value="1"/>
</dbReference>
<dbReference type="Gene3D" id="3.30.70.80">
    <property type="entry name" value="Peptidase S8 propeptide/proteinase inhibitor I9"/>
    <property type="match status" value="1"/>
</dbReference>
<dbReference type="Gene3D" id="3.40.50.200">
    <property type="entry name" value="Peptidase S8/S53 domain"/>
    <property type="match status" value="1"/>
</dbReference>
<dbReference type="InterPro" id="IPR034193">
    <property type="entry name" value="PCSK9_ProteinaseK-like"/>
</dbReference>
<dbReference type="InterPro" id="IPR000209">
    <property type="entry name" value="Peptidase_S8/S53_dom"/>
</dbReference>
<dbReference type="InterPro" id="IPR036852">
    <property type="entry name" value="Peptidase_S8/S53_dom_sf"/>
</dbReference>
<dbReference type="InterPro" id="IPR023827">
    <property type="entry name" value="Peptidase_S8_Asp-AS"/>
</dbReference>
<dbReference type="InterPro" id="IPR022398">
    <property type="entry name" value="Peptidase_S8_His-AS"/>
</dbReference>
<dbReference type="InterPro" id="IPR023828">
    <property type="entry name" value="Peptidase_S8_Ser-AS"/>
</dbReference>
<dbReference type="InterPro" id="IPR050131">
    <property type="entry name" value="Peptidase_S8_subtilisin-like"/>
</dbReference>
<dbReference type="InterPro" id="IPR015500">
    <property type="entry name" value="Peptidase_S8_subtilisin-rel"/>
</dbReference>
<dbReference type="InterPro" id="IPR010259">
    <property type="entry name" value="S8pro/Inhibitor_I9"/>
</dbReference>
<dbReference type="InterPro" id="IPR037045">
    <property type="entry name" value="S8pro/Inhibitor_I9_sf"/>
</dbReference>
<dbReference type="PANTHER" id="PTHR43806:SF58">
    <property type="entry name" value="ALKALINE PROTEASE 1-RELATED"/>
    <property type="match status" value="1"/>
</dbReference>
<dbReference type="PANTHER" id="PTHR43806">
    <property type="entry name" value="PEPTIDASE S8"/>
    <property type="match status" value="1"/>
</dbReference>
<dbReference type="Pfam" id="PF05922">
    <property type="entry name" value="Inhibitor_I9"/>
    <property type="match status" value="1"/>
</dbReference>
<dbReference type="Pfam" id="PF00082">
    <property type="entry name" value="Peptidase_S8"/>
    <property type="match status" value="1"/>
</dbReference>
<dbReference type="PRINTS" id="PR00723">
    <property type="entry name" value="SUBTILISIN"/>
</dbReference>
<dbReference type="SUPFAM" id="SSF52743">
    <property type="entry name" value="Subtilisin-like"/>
    <property type="match status" value="1"/>
</dbReference>
<dbReference type="PROSITE" id="PS51892">
    <property type="entry name" value="SUBTILASE"/>
    <property type="match status" value="1"/>
</dbReference>
<dbReference type="PROSITE" id="PS00136">
    <property type="entry name" value="SUBTILASE_ASP"/>
    <property type="match status" value="1"/>
</dbReference>
<dbReference type="PROSITE" id="PS00137">
    <property type="entry name" value="SUBTILASE_HIS"/>
    <property type="match status" value="1"/>
</dbReference>
<dbReference type="PROSITE" id="PS00138">
    <property type="entry name" value="SUBTILASE_SER"/>
    <property type="match status" value="1"/>
</dbReference>
<organism>
    <name type="scientific">Coccidioides posadasii (strain C735)</name>
    <name type="common">Valley fever fungus</name>
    <dbReference type="NCBI Taxonomy" id="222929"/>
    <lineage>
        <taxon>Eukaryota</taxon>
        <taxon>Fungi</taxon>
        <taxon>Dikarya</taxon>
        <taxon>Ascomycota</taxon>
        <taxon>Pezizomycotina</taxon>
        <taxon>Eurotiomycetes</taxon>
        <taxon>Eurotiomycetidae</taxon>
        <taxon>Onygenales</taxon>
        <taxon>Onygenaceae</taxon>
        <taxon>Coccidioides</taxon>
    </lineage>
</organism>
<reference key="1">
    <citation type="journal article" date="2009" name="Genome Res.">
        <title>Comparative genomic analyses of the human fungal pathogens Coccidioides and their relatives.</title>
        <authorList>
            <person name="Sharpton T.J."/>
            <person name="Stajich J.E."/>
            <person name="Rounsley S.D."/>
            <person name="Gardner M.J."/>
            <person name="Wortman J.R."/>
            <person name="Jordar V.S."/>
            <person name="Maiti R."/>
            <person name="Kodira C.D."/>
            <person name="Neafsey D.E."/>
            <person name="Zeng Q."/>
            <person name="Hung C.-Y."/>
            <person name="McMahan C."/>
            <person name="Muszewska A."/>
            <person name="Grynberg M."/>
            <person name="Mandel M.A."/>
            <person name="Kellner E.M."/>
            <person name="Barker B.M."/>
            <person name="Galgiani J.N."/>
            <person name="Orbach M.J."/>
            <person name="Kirkland T.N."/>
            <person name="Cole G.T."/>
            <person name="Henn M.R."/>
            <person name="Birren B.W."/>
            <person name="Taylor J.W."/>
        </authorList>
    </citation>
    <scope>NUCLEOTIDE SEQUENCE [LARGE SCALE GENOMIC DNA]</scope>
    <source>
        <strain>C735</strain>
    </source>
</reference>
<accession>C5NZ70</accession>
<feature type="signal peptide" evidence="2">
    <location>
        <begin position="1"/>
        <end position="17"/>
    </location>
</feature>
<feature type="propeptide" id="PRO_0000407010" evidence="1">
    <location>
        <begin position="18"/>
        <end position="115"/>
    </location>
</feature>
<feature type="chain" id="PRO_0000407011" description="Subtilisin-like protease CPC735_013710">
    <location>
        <begin position="116"/>
        <end position="407"/>
    </location>
</feature>
<feature type="domain" description="Inhibitor I9" evidence="2">
    <location>
        <begin position="31"/>
        <end position="114"/>
    </location>
</feature>
<feature type="domain" description="Peptidase S8" evidence="3">
    <location>
        <begin position="124"/>
        <end position="407"/>
    </location>
</feature>
<feature type="active site" description="Charge relay system" evidence="3">
    <location>
        <position position="162"/>
    </location>
</feature>
<feature type="active site" description="Charge relay system" evidence="3">
    <location>
        <position position="194"/>
    </location>
</feature>
<feature type="active site" description="Charge relay system" evidence="3">
    <location>
        <position position="350"/>
    </location>
</feature>
<feature type="glycosylation site" description="N-linked (GlcNAc...) asparagine" evidence="2">
    <location>
        <position position="145"/>
    </location>
</feature>
<feature type="glycosylation site" description="N-linked (GlcNAc...) asparagine" evidence="2">
    <location>
        <position position="241"/>
    </location>
</feature>
<feature type="glycosylation site" description="N-linked (GlcNAc...) asparagine" evidence="2">
    <location>
        <position position="254"/>
    </location>
</feature>
<feature type="glycosylation site" description="N-linked (GlcNAc...) asparagine" evidence="2">
    <location>
        <position position="341"/>
    </location>
</feature>
<feature type="glycosylation site" description="N-linked (GlcNAc...) asparagine" evidence="2">
    <location>
        <position position="381"/>
    </location>
</feature>
<comment type="function">
    <text evidence="1">Secreted subtilisin-like serine protease with keratinolytic activity that contributes to pathogenicity.</text>
</comment>
<comment type="subcellular location">
    <subcellularLocation>
        <location evidence="1">Secreted</location>
    </subcellularLocation>
</comment>
<comment type="similarity">
    <text evidence="4">Belongs to the peptidase S8 family.</text>
</comment>
<sequence>MQLLNLSLFFLLPFATANPIPQDSQNIIPGQYIVTLKDGLTTAEIDAHKTWLAFTHRSNIAAKGHSGIESEGVFKHFQIHKLNMYAAGLDKKTVEELRRSPHVKSVLPDQKIYLAEAVTQSNAGWNLGYMSSKGQPSPSWSTLTNYTYDSTAGEGVWAYVLDTGVNVNHVEFEGRAILGRNSIPNRPHEDTFGHGTYVGGIIAGKTYGVAKKATVVSAKAFDGGSSSYRYILDSYEWIVKNITDSDRKSKSVINLSISGAKYQPFDEAIENAFQAGITTVVASGNDGRDASQNTPASSPNAITVGALRWENTRPGFSNYGKVVDLFAPGELIRSGWTGGNNATRVASGTSAASPHVAGLVAYLMSIETLSSPSEVTARVLNLTIPGLVKDARGSPNKVAYNGIQEML</sequence>
<gene>
    <name type="ORF">CPC735_013710</name>
</gene>
<keyword id="KW-0325">Glycoprotein</keyword>
<keyword id="KW-0378">Hydrolase</keyword>
<keyword id="KW-0645">Protease</keyword>
<keyword id="KW-0964">Secreted</keyword>
<keyword id="KW-0720">Serine protease</keyword>
<keyword id="KW-0732">Signal</keyword>
<keyword id="KW-0843">Virulence</keyword>
<keyword id="KW-0865">Zymogen</keyword>